<reference key="1">
    <citation type="journal article" date="2000" name="Nature">
        <title>The genome sequence of the food-borne pathogen Campylobacter jejuni reveals hypervariable sequences.</title>
        <authorList>
            <person name="Parkhill J."/>
            <person name="Wren B.W."/>
            <person name="Mungall K.L."/>
            <person name="Ketley J.M."/>
            <person name="Churcher C.M."/>
            <person name="Basham D."/>
            <person name="Chillingworth T."/>
            <person name="Davies R.M."/>
            <person name="Feltwell T."/>
            <person name="Holroyd S."/>
            <person name="Jagels K."/>
            <person name="Karlyshev A.V."/>
            <person name="Moule S."/>
            <person name="Pallen M.J."/>
            <person name="Penn C.W."/>
            <person name="Quail M.A."/>
            <person name="Rajandream M.A."/>
            <person name="Rutherford K.M."/>
            <person name="van Vliet A.H.M."/>
            <person name="Whitehead S."/>
            <person name="Barrell B.G."/>
        </authorList>
    </citation>
    <scope>NUCLEOTIDE SEQUENCE [LARGE SCALE GENOMIC DNA]</scope>
    <source>
        <strain>ATCC 700819 / NCTC 11168</strain>
    </source>
</reference>
<evidence type="ECO:0000250" key="1"/>
<evidence type="ECO:0000255" key="2">
    <source>
        <dbReference type="PROSITE-ProRule" id="PRU01319"/>
    </source>
</evidence>
<evidence type="ECO:0000305" key="3"/>
<sequence length="191" mass="21480">MKTLFDTKELLNEFDINLIGIDEAGRGALAGPMMMAACKLNKQLDGLCDSKKLSEKKREELYEIIIKNSNYLILAFSSEQIDALGLSTCLKKGLKLIKKHFKTENNFLYDGNTNLGINGIKTQIKADTSILQVSAASILAKVSKDRVMNFLAKDFPCYEFEKNKAYGTKAHKEFIAKFGICKLHRKSFKLL</sequence>
<keyword id="KW-0963">Cytoplasm</keyword>
<keyword id="KW-0255">Endonuclease</keyword>
<keyword id="KW-0378">Hydrolase</keyword>
<keyword id="KW-0464">Manganese</keyword>
<keyword id="KW-0479">Metal-binding</keyword>
<keyword id="KW-0540">Nuclease</keyword>
<keyword id="KW-1185">Reference proteome</keyword>
<proteinExistence type="inferred from homology"/>
<name>RNH2_CAMJE</name>
<accession>Q9PJA1</accession>
<accession>Q0PCB5</accession>
<feature type="chain" id="PRO_0000111553" description="Ribonuclease HII">
    <location>
        <begin position="1"/>
        <end position="191"/>
    </location>
</feature>
<feature type="domain" description="RNase H type-2" evidence="2">
    <location>
        <begin position="16"/>
        <end position="191"/>
    </location>
</feature>
<feature type="binding site" evidence="1">
    <location>
        <position position="22"/>
    </location>
    <ligand>
        <name>a divalent metal cation</name>
        <dbReference type="ChEBI" id="CHEBI:60240"/>
    </ligand>
</feature>
<feature type="binding site" evidence="1">
    <location>
        <position position="23"/>
    </location>
    <ligand>
        <name>a divalent metal cation</name>
        <dbReference type="ChEBI" id="CHEBI:60240"/>
    </ligand>
</feature>
<feature type="binding site" evidence="1">
    <location>
        <position position="110"/>
    </location>
    <ligand>
        <name>a divalent metal cation</name>
        <dbReference type="ChEBI" id="CHEBI:60240"/>
    </ligand>
</feature>
<dbReference type="EC" id="3.1.26.4"/>
<dbReference type="EMBL" id="AL111168">
    <property type="protein sequence ID" value="CAL34191.1"/>
    <property type="molecule type" value="Genomic_DNA"/>
</dbReference>
<dbReference type="PIR" id="E81416">
    <property type="entry name" value="E81416"/>
</dbReference>
<dbReference type="RefSeq" id="WP_002853153.1">
    <property type="nucleotide sequence ID" value="NZ_SZUC01000002.1"/>
</dbReference>
<dbReference type="RefSeq" id="YP_002343482.1">
    <property type="nucleotide sequence ID" value="NC_002163.1"/>
</dbReference>
<dbReference type="SMR" id="Q9PJA1"/>
<dbReference type="STRING" id="192222.Cj0010c"/>
<dbReference type="PaxDb" id="192222-Cj0010c"/>
<dbReference type="EnsemblBacteria" id="CAL34191">
    <property type="protein sequence ID" value="CAL34191"/>
    <property type="gene ID" value="Cj0010c"/>
</dbReference>
<dbReference type="GeneID" id="904334"/>
<dbReference type="KEGG" id="cje:Cj0010c"/>
<dbReference type="PATRIC" id="fig|192222.6.peg.10"/>
<dbReference type="eggNOG" id="COG0164">
    <property type="taxonomic scope" value="Bacteria"/>
</dbReference>
<dbReference type="HOGENOM" id="CLU_036532_3_1_7"/>
<dbReference type="OrthoDB" id="9803420at2"/>
<dbReference type="Proteomes" id="UP000000799">
    <property type="component" value="Chromosome"/>
</dbReference>
<dbReference type="GO" id="GO:0005737">
    <property type="term" value="C:cytoplasm"/>
    <property type="evidence" value="ECO:0007669"/>
    <property type="project" value="UniProtKB-SubCell"/>
</dbReference>
<dbReference type="GO" id="GO:0032299">
    <property type="term" value="C:ribonuclease H2 complex"/>
    <property type="evidence" value="ECO:0007669"/>
    <property type="project" value="TreeGrafter"/>
</dbReference>
<dbReference type="GO" id="GO:0030145">
    <property type="term" value="F:manganese ion binding"/>
    <property type="evidence" value="ECO:0007669"/>
    <property type="project" value="UniProtKB-UniRule"/>
</dbReference>
<dbReference type="GO" id="GO:0003723">
    <property type="term" value="F:RNA binding"/>
    <property type="evidence" value="ECO:0007669"/>
    <property type="project" value="InterPro"/>
</dbReference>
<dbReference type="GO" id="GO:0004523">
    <property type="term" value="F:RNA-DNA hybrid ribonuclease activity"/>
    <property type="evidence" value="ECO:0007669"/>
    <property type="project" value="UniProtKB-UniRule"/>
</dbReference>
<dbReference type="GO" id="GO:0043137">
    <property type="term" value="P:DNA replication, removal of RNA primer"/>
    <property type="evidence" value="ECO:0007669"/>
    <property type="project" value="TreeGrafter"/>
</dbReference>
<dbReference type="GO" id="GO:0006298">
    <property type="term" value="P:mismatch repair"/>
    <property type="evidence" value="ECO:0007669"/>
    <property type="project" value="TreeGrafter"/>
</dbReference>
<dbReference type="CDD" id="cd07182">
    <property type="entry name" value="RNase_HII_bacteria_HII_like"/>
    <property type="match status" value="1"/>
</dbReference>
<dbReference type="Gene3D" id="3.30.420.10">
    <property type="entry name" value="Ribonuclease H-like superfamily/Ribonuclease H"/>
    <property type="match status" value="1"/>
</dbReference>
<dbReference type="HAMAP" id="MF_00052_B">
    <property type="entry name" value="RNase_HII_B"/>
    <property type="match status" value="1"/>
</dbReference>
<dbReference type="InterPro" id="IPR022898">
    <property type="entry name" value="RNase_HII"/>
</dbReference>
<dbReference type="InterPro" id="IPR001352">
    <property type="entry name" value="RNase_HII/HIII"/>
</dbReference>
<dbReference type="InterPro" id="IPR024567">
    <property type="entry name" value="RNase_HII/HIII_dom"/>
</dbReference>
<dbReference type="InterPro" id="IPR012337">
    <property type="entry name" value="RNaseH-like_sf"/>
</dbReference>
<dbReference type="InterPro" id="IPR036397">
    <property type="entry name" value="RNaseH_sf"/>
</dbReference>
<dbReference type="NCBIfam" id="NF000595">
    <property type="entry name" value="PRK00015.1-3"/>
    <property type="match status" value="1"/>
</dbReference>
<dbReference type="PANTHER" id="PTHR10954">
    <property type="entry name" value="RIBONUCLEASE H2 SUBUNIT A"/>
    <property type="match status" value="1"/>
</dbReference>
<dbReference type="PANTHER" id="PTHR10954:SF18">
    <property type="entry name" value="RIBONUCLEASE HII"/>
    <property type="match status" value="1"/>
</dbReference>
<dbReference type="Pfam" id="PF01351">
    <property type="entry name" value="RNase_HII"/>
    <property type="match status" value="1"/>
</dbReference>
<dbReference type="SUPFAM" id="SSF53098">
    <property type="entry name" value="Ribonuclease H-like"/>
    <property type="match status" value="1"/>
</dbReference>
<dbReference type="PROSITE" id="PS51975">
    <property type="entry name" value="RNASE_H_2"/>
    <property type="match status" value="1"/>
</dbReference>
<gene>
    <name type="primary">rnhB</name>
    <name type="ordered locus">Cj0010c</name>
</gene>
<comment type="function">
    <text evidence="1">Endonuclease that specifically degrades the RNA of RNA-DNA hybrids.</text>
</comment>
<comment type="catalytic activity">
    <reaction>
        <text>Endonucleolytic cleavage to 5'-phosphomonoester.</text>
        <dbReference type="EC" id="3.1.26.4"/>
    </reaction>
</comment>
<comment type="cofactor">
    <cofactor evidence="1">
        <name>Mn(2+)</name>
        <dbReference type="ChEBI" id="CHEBI:29035"/>
    </cofactor>
    <cofactor evidence="1">
        <name>Mg(2+)</name>
        <dbReference type="ChEBI" id="CHEBI:18420"/>
    </cofactor>
    <text evidence="1">Manganese or magnesium. Binds 1 divalent metal ion per monomer in the absence of substrate. May bind a second metal ion after substrate binding.</text>
</comment>
<comment type="subcellular location">
    <subcellularLocation>
        <location evidence="3">Cytoplasm</location>
    </subcellularLocation>
</comment>
<comment type="similarity">
    <text evidence="3">Belongs to the RNase HII family.</text>
</comment>
<organism>
    <name type="scientific">Campylobacter jejuni subsp. jejuni serotype O:2 (strain ATCC 700819 / NCTC 11168)</name>
    <dbReference type="NCBI Taxonomy" id="192222"/>
    <lineage>
        <taxon>Bacteria</taxon>
        <taxon>Pseudomonadati</taxon>
        <taxon>Campylobacterota</taxon>
        <taxon>Epsilonproteobacteria</taxon>
        <taxon>Campylobacterales</taxon>
        <taxon>Campylobacteraceae</taxon>
        <taxon>Campylobacter</taxon>
    </lineage>
</organism>
<protein>
    <recommendedName>
        <fullName>Ribonuclease HII</fullName>
        <shortName>RNase HII</shortName>
        <ecNumber>3.1.26.4</ecNumber>
    </recommendedName>
</protein>